<gene>
    <name type="primary">rutC</name>
    <name type="synonym">ycdK</name>
    <name type="ordered locus">b1010</name>
    <name type="ordered locus">JW0995</name>
</gene>
<dbReference type="EC" id="3.5.-.-" evidence="6"/>
<dbReference type="EMBL" id="U00096">
    <property type="protein sequence ID" value="AAC74095.1"/>
    <property type="molecule type" value="Genomic_DNA"/>
</dbReference>
<dbReference type="EMBL" id="AP009048">
    <property type="protein sequence ID" value="BAA35777.1"/>
    <property type="molecule type" value="Genomic_DNA"/>
</dbReference>
<dbReference type="PIR" id="H64842">
    <property type="entry name" value="H64842"/>
</dbReference>
<dbReference type="RefSeq" id="NP_415530.1">
    <property type="nucleotide sequence ID" value="NC_000913.3"/>
</dbReference>
<dbReference type="RefSeq" id="WP_001126780.1">
    <property type="nucleotide sequence ID" value="NZ_SSZK01000002.1"/>
</dbReference>
<dbReference type="SMR" id="P0AFQ5"/>
<dbReference type="BioGRID" id="4260036">
    <property type="interactions" value="21"/>
</dbReference>
<dbReference type="FunCoup" id="P0AFQ5">
    <property type="interactions" value="73"/>
</dbReference>
<dbReference type="IntAct" id="P0AFQ5">
    <property type="interactions" value="7"/>
</dbReference>
<dbReference type="STRING" id="511145.b1010"/>
<dbReference type="PaxDb" id="511145-b1010"/>
<dbReference type="EnsemblBacteria" id="AAC74095">
    <property type="protein sequence ID" value="AAC74095"/>
    <property type="gene ID" value="b1010"/>
</dbReference>
<dbReference type="GeneID" id="75171086"/>
<dbReference type="GeneID" id="945599"/>
<dbReference type="KEGG" id="ecj:JW0995"/>
<dbReference type="KEGG" id="eco:b1010"/>
<dbReference type="KEGG" id="ecoc:C3026_06145"/>
<dbReference type="PATRIC" id="fig|1411691.4.peg.1261"/>
<dbReference type="EchoBASE" id="EB3617"/>
<dbReference type="eggNOG" id="COG0251">
    <property type="taxonomic scope" value="Bacteria"/>
</dbReference>
<dbReference type="HOGENOM" id="CLU_100715_7_3_6"/>
<dbReference type="InParanoid" id="P0AFQ5"/>
<dbReference type="OMA" id="IFLTEFK"/>
<dbReference type="OrthoDB" id="583118at2"/>
<dbReference type="PhylomeDB" id="P0AFQ5"/>
<dbReference type="BioCyc" id="EcoCyc:G6521-MONOMER"/>
<dbReference type="BioCyc" id="MetaCyc:G6521-MONOMER"/>
<dbReference type="PRO" id="PR:P0AFQ5"/>
<dbReference type="Proteomes" id="UP000000625">
    <property type="component" value="Chromosome"/>
</dbReference>
<dbReference type="GO" id="GO:0005829">
    <property type="term" value="C:cytosol"/>
    <property type="evidence" value="ECO:0000318"/>
    <property type="project" value="GO_Central"/>
</dbReference>
<dbReference type="GO" id="GO:0019239">
    <property type="term" value="F:deaminase activity"/>
    <property type="evidence" value="ECO:0000314"/>
    <property type="project" value="EcoCyc"/>
</dbReference>
<dbReference type="GO" id="GO:0042802">
    <property type="term" value="F:identical protein binding"/>
    <property type="evidence" value="ECO:0000314"/>
    <property type="project" value="EcoCyc"/>
</dbReference>
<dbReference type="GO" id="GO:0019740">
    <property type="term" value="P:nitrogen utilization"/>
    <property type="evidence" value="ECO:0000315"/>
    <property type="project" value="UniProtKB"/>
</dbReference>
<dbReference type="GO" id="GO:0006208">
    <property type="term" value="P:pyrimidine nucleobase catabolic process"/>
    <property type="evidence" value="ECO:0000315"/>
    <property type="project" value="EcoCyc"/>
</dbReference>
<dbReference type="GO" id="GO:0006212">
    <property type="term" value="P:uracil catabolic process"/>
    <property type="evidence" value="ECO:0000315"/>
    <property type="project" value="UniProtKB"/>
</dbReference>
<dbReference type="CDD" id="cd00448">
    <property type="entry name" value="YjgF_YER057c_UK114_family"/>
    <property type="match status" value="1"/>
</dbReference>
<dbReference type="FunFam" id="3.30.1330.40:FF:000003">
    <property type="entry name" value="Putative aminoacrylate peracid reductase RutC"/>
    <property type="match status" value="1"/>
</dbReference>
<dbReference type="Gene3D" id="3.30.1330.40">
    <property type="entry name" value="RutC-like"/>
    <property type="match status" value="1"/>
</dbReference>
<dbReference type="HAMAP" id="MF_00831">
    <property type="entry name" value="RutC"/>
    <property type="match status" value="1"/>
</dbReference>
<dbReference type="InterPro" id="IPR019897">
    <property type="entry name" value="RidA_CS"/>
</dbReference>
<dbReference type="InterPro" id="IPR019898">
    <property type="entry name" value="RutC"/>
</dbReference>
<dbReference type="InterPro" id="IPR035959">
    <property type="entry name" value="RutC-like_sf"/>
</dbReference>
<dbReference type="InterPro" id="IPR006175">
    <property type="entry name" value="YjgF/YER057c/UK114"/>
</dbReference>
<dbReference type="NCBIfam" id="TIGR03610">
    <property type="entry name" value="RutC"/>
    <property type="match status" value="1"/>
</dbReference>
<dbReference type="PANTHER" id="PTHR11803">
    <property type="entry name" value="2-IMINOBUTANOATE/2-IMINOPROPANOATE DEAMINASE RIDA"/>
    <property type="match status" value="1"/>
</dbReference>
<dbReference type="PANTHER" id="PTHR11803:SF58">
    <property type="entry name" value="PROTEIN HMF1-RELATED"/>
    <property type="match status" value="1"/>
</dbReference>
<dbReference type="Pfam" id="PF01042">
    <property type="entry name" value="Ribonuc_L-PSP"/>
    <property type="match status" value="1"/>
</dbReference>
<dbReference type="SUPFAM" id="SSF55298">
    <property type="entry name" value="YjgF-like"/>
    <property type="match status" value="1"/>
</dbReference>
<dbReference type="PROSITE" id="PS01094">
    <property type="entry name" value="UPF0076"/>
    <property type="match status" value="1"/>
</dbReference>
<proteinExistence type="evidence at protein level"/>
<sequence>MPKSVIIPAGSSAPLAPFVPGTLADGVVYVSGTLAFDQHNNVLFADDPKAQTRHVLETIRKVIETAGGTMADVTFNSIFITDWKNYAAINEIYAEFFPGDKPARFCIQCGLVKPDALVEIATIAHIAK</sequence>
<keyword id="KW-0378">Hydrolase</keyword>
<keyword id="KW-1185">Reference proteome</keyword>
<reference key="1">
    <citation type="journal article" date="1996" name="DNA Res.">
        <title>A 718-kb DNA sequence of the Escherichia coli K-12 genome corresponding to the 12.7-28.0 min region on the linkage map.</title>
        <authorList>
            <person name="Oshima T."/>
            <person name="Aiba H."/>
            <person name="Baba T."/>
            <person name="Fujita K."/>
            <person name="Hayashi K."/>
            <person name="Honjo A."/>
            <person name="Ikemoto K."/>
            <person name="Inada T."/>
            <person name="Itoh T."/>
            <person name="Kajihara M."/>
            <person name="Kanai K."/>
            <person name="Kashimoto K."/>
            <person name="Kimura S."/>
            <person name="Kitagawa M."/>
            <person name="Makino K."/>
            <person name="Masuda S."/>
            <person name="Miki T."/>
            <person name="Mizobuchi K."/>
            <person name="Mori H."/>
            <person name="Motomura K."/>
            <person name="Nakamura Y."/>
            <person name="Nashimoto H."/>
            <person name="Nishio Y."/>
            <person name="Saito N."/>
            <person name="Sampei G."/>
            <person name="Seki Y."/>
            <person name="Tagami H."/>
            <person name="Takemoto K."/>
            <person name="Wada C."/>
            <person name="Yamamoto Y."/>
            <person name="Yano M."/>
            <person name="Horiuchi T."/>
        </authorList>
    </citation>
    <scope>NUCLEOTIDE SEQUENCE [LARGE SCALE GENOMIC DNA]</scope>
    <source>
        <strain>K12 / W3110 / ATCC 27325 / DSM 5911</strain>
    </source>
</reference>
<reference key="2">
    <citation type="journal article" date="1997" name="Science">
        <title>The complete genome sequence of Escherichia coli K-12.</title>
        <authorList>
            <person name="Blattner F.R."/>
            <person name="Plunkett G. III"/>
            <person name="Bloch C.A."/>
            <person name="Perna N.T."/>
            <person name="Burland V."/>
            <person name="Riley M."/>
            <person name="Collado-Vides J."/>
            <person name="Glasner J.D."/>
            <person name="Rode C.K."/>
            <person name="Mayhew G.F."/>
            <person name="Gregor J."/>
            <person name="Davis N.W."/>
            <person name="Kirkpatrick H.A."/>
            <person name="Goeden M.A."/>
            <person name="Rose D.J."/>
            <person name="Mau B."/>
            <person name="Shao Y."/>
        </authorList>
    </citation>
    <scope>NUCLEOTIDE SEQUENCE [LARGE SCALE GENOMIC DNA]</scope>
    <source>
        <strain>K12 / MG1655 / ATCC 47076</strain>
    </source>
</reference>
<reference key="3">
    <citation type="journal article" date="2006" name="Mol. Syst. Biol.">
        <title>Highly accurate genome sequences of Escherichia coli K-12 strains MG1655 and W3110.</title>
        <authorList>
            <person name="Hayashi K."/>
            <person name="Morooka N."/>
            <person name="Yamamoto Y."/>
            <person name="Fujita K."/>
            <person name="Isono K."/>
            <person name="Choi S."/>
            <person name="Ohtsubo E."/>
            <person name="Baba T."/>
            <person name="Wanner B.L."/>
            <person name="Mori H."/>
            <person name="Horiuchi T."/>
        </authorList>
    </citation>
    <scope>NUCLEOTIDE SEQUENCE [LARGE SCALE GENOMIC DNA]</scope>
    <source>
        <strain>K12 / W3110 / ATCC 27325 / DSM 5911</strain>
    </source>
</reference>
<reference key="4">
    <citation type="journal article" date="2000" name="Proc. Natl. Acad. Sci. U.S.A.">
        <title>Nitrogen regulatory protein C-controlled genes of Escherichia coli: scavenging as a defense against nitrogen limitation.</title>
        <authorList>
            <person name="Zimmer D.P."/>
            <person name="Soupene E."/>
            <person name="Lee H.L."/>
            <person name="Wendisch V.F."/>
            <person name="Khodursky A.B."/>
            <person name="Peter B.J."/>
            <person name="Bender R.A."/>
            <person name="Kustu S."/>
        </authorList>
    </citation>
    <scope>INDUCTION</scope>
</reference>
<reference key="5">
    <citation type="journal article" date="2006" name="Proc. Natl. Acad. Sci. U.S.A.">
        <title>A previously undescribed pathway for pyrimidine catabolism.</title>
        <authorList>
            <person name="Loh K.D."/>
            <person name="Gyaneshwar P."/>
            <person name="Markenscoff Papadimitriou E."/>
            <person name="Fong R."/>
            <person name="Kim K.-S."/>
            <person name="Parales R."/>
            <person name="Zhou Z."/>
            <person name="Inwood W."/>
            <person name="Kustu S."/>
        </authorList>
    </citation>
    <scope>FUNCTION IN PYRIMIDINE CATABOLISM</scope>
    <scope>NOMENCLATURE</scope>
    <source>
        <strain>K12 / MG1655 / ATCC 47076</strain>
    </source>
</reference>
<reference key="6">
    <citation type="journal article" date="2007" name="Mol. Microbiol.">
        <title>RutR is the uracil/thymine-sensing master regulator of a set of genes for synthesis and degradation of pyrimidines.</title>
        <authorList>
            <person name="Shimada T."/>
            <person name="Hirao K."/>
            <person name="Kori A."/>
            <person name="Yamamoto K."/>
            <person name="Ishihama A."/>
        </authorList>
    </citation>
    <scope>INDUCTION</scope>
</reference>
<reference key="7">
    <citation type="journal article" date="2010" name="J. Bacteriol.">
        <title>The Rut pathway for pyrimidine degradation: novel chemistry and toxicity problems.</title>
        <authorList>
            <person name="Kim K.S."/>
            <person name="Pelton J.G."/>
            <person name="Inwood W.B."/>
            <person name="Andersen U."/>
            <person name="Kustu S."/>
            <person name="Wemmer D.E."/>
        </authorList>
    </citation>
    <scope>DISRUPTION PHENOTYPE</scope>
</reference>
<reference key="8">
    <citation type="journal article" date="2021" name="J. Biol. Chem.">
        <title>The Rid family member RutC of Escherichia coli is a 3-aminoacrylate deaminase.</title>
        <authorList>
            <person name="Buckner B.A."/>
            <person name="Lato A.M."/>
            <person name="Campagna S.R."/>
            <person name="Downs D.M."/>
        </authorList>
    </citation>
    <scope>FUNCTION</scope>
    <scope>CATALYTIC ACTIVITY</scope>
    <scope>BIOPHYSICOCHEMICAL PROPERTIES</scope>
    <scope>DISRUPTION PHENOTYPE</scope>
    <scope>MUTAGENESIS OF ARG-104</scope>
    <source>
        <strain>K12</strain>
    </source>
</reference>
<accession>P0AFQ5</accession>
<accession>P75896</accession>
<name>RUTC_ECOLI</name>
<protein>
    <recommendedName>
        <fullName evidence="7">3-aminoacrylate deaminase RutC</fullName>
        <shortName evidence="7">3-AA deaminase</shortName>
        <ecNumber evidence="6">3.5.-.-</ecNumber>
    </recommendedName>
</protein>
<feature type="chain" id="PRO_0000170319" description="3-aminoacrylate deaminase RutC">
    <location>
        <begin position="1"/>
        <end position="128"/>
    </location>
</feature>
<feature type="mutagenesis site" description="Loss of activity." evidence="6">
    <original>R</original>
    <variation>A</variation>
    <location>
        <position position="104"/>
    </location>
</feature>
<evidence type="ECO:0000255" key="1">
    <source>
        <dbReference type="HAMAP-Rule" id="MF_00831"/>
    </source>
</evidence>
<evidence type="ECO:0000269" key="2">
    <source>
    </source>
</evidence>
<evidence type="ECO:0000269" key="3">
    <source>
    </source>
</evidence>
<evidence type="ECO:0000269" key="4">
    <source>
    </source>
</evidence>
<evidence type="ECO:0000269" key="5">
    <source>
    </source>
</evidence>
<evidence type="ECO:0000269" key="6">
    <source>
    </source>
</evidence>
<evidence type="ECO:0000303" key="7">
    <source>
    </source>
</evidence>
<evidence type="ECO:0000305" key="8"/>
<organism>
    <name type="scientific">Escherichia coli (strain K12)</name>
    <dbReference type="NCBI Taxonomy" id="83333"/>
    <lineage>
        <taxon>Bacteria</taxon>
        <taxon>Pseudomonadati</taxon>
        <taxon>Pseudomonadota</taxon>
        <taxon>Gammaproteobacteria</taxon>
        <taxon>Enterobacterales</taxon>
        <taxon>Enterobacteriaceae</taxon>
        <taxon>Escherichia</taxon>
    </lineage>
</organism>
<comment type="function">
    <text evidence="3 6">Involved in pyrimidine catabolism (PubMed:16540542). Catalyzes the deamination of 3-aminoacrylate to malonic semialdehyde, a reaction that can also occur spontaneously (PubMed:33839153). RutC may facilitate the reaction and modulate the metabolic fitness, rather than catalyzing essential functions (PubMed:33839153). In vitro, can also deaminate 2-aminoacrylate (PubMed:33839153).</text>
</comment>
<comment type="catalytic activity">
    <reaction evidence="6">
        <text>(Z)-3-aminoacrylate + H2O + H(+) = 3-oxopropanoate + NH4(+)</text>
        <dbReference type="Rhea" id="RHEA:34947"/>
        <dbReference type="ChEBI" id="CHEBI:15377"/>
        <dbReference type="ChEBI" id="CHEBI:15378"/>
        <dbReference type="ChEBI" id="CHEBI:28938"/>
        <dbReference type="ChEBI" id="CHEBI:33190"/>
        <dbReference type="ChEBI" id="CHEBI:59894"/>
    </reaction>
</comment>
<comment type="biophysicochemical properties">
    <kinetics>
        <KM evidence="6">9.1 mM for 3-aminoacrylate</KM>
        <text evidence="6">kcat is 52 min(-1) with 3-aminoacrylate as substrate.</text>
    </kinetics>
</comment>
<comment type="subunit">
    <text evidence="1">Homotrimer.</text>
</comment>
<comment type="induction">
    <text evidence="2 4">Up-regulated by the nitrogen regulatory protein C (NtrC also called GlnG) and repressed by RutR.</text>
</comment>
<comment type="disruption phenotype">
    <text evidence="5 6">Cells lacking this gene fail to grow on uridine as the sole source of nitrogen at room temperature (PubMed:20400551, PubMed:33839153). Expression of rutC in trans did not restore growth (PubMed:33839153). However, a plasmid carrying the complete rutCDEFG operon restored growth of the deletion mutant with uridine as sole nitrogen source, suggesting that the lesion in rutC was polar on downstream gene(s) required for rut pathway function (PubMed:33839153).</text>
</comment>
<comment type="miscellaneous">
    <text evidence="6">This reaction can occur spontaneously. Under standard laboratory conditions, a Rut pathway lacking RutC generates sufficient nitrogen from uracil for growth of E.coli.</text>
</comment>
<comment type="miscellaneous">
    <text>The Rut pathway degrades exogenous pyrimidines as the sole nitrogen source at room temperature but not at 37 degrees Celsius, a restriction that is apparently a consequence of an inadequate ability to remove toxic malonic semialdehyde at the higher temperature (RutE/YdfG function).</text>
</comment>
<comment type="similarity">
    <text evidence="1 8">Belongs to the RutC family.</text>
</comment>